<feature type="chain" id="PRO_1000067707" description="ATP synthase subunit alpha">
    <location>
        <begin position="1"/>
        <end position="505"/>
    </location>
</feature>
<feature type="binding site" evidence="1">
    <location>
        <begin position="169"/>
        <end position="176"/>
    </location>
    <ligand>
        <name>ATP</name>
        <dbReference type="ChEBI" id="CHEBI:30616"/>
    </ligand>
</feature>
<feature type="site" description="Required for activity" evidence="1">
    <location>
        <position position="362"/>
    </location>
</feature>
<gene>
    <name evidence="1" type="primary">atpA</name>
    <name type="ordered locus">Amet_0351</name>
</gene>
<reference key="1">
    <citation type="journal article" date="2016" name="Genome Announc.">
        <title>Complete genome sequence of Alkaliphilus metalliredigens strain QYMF, an alkaliphilic and metal-reducing bacterium isolated from borax-contaminated leachate ponds.</title>
        <authorList>
            <person name="Hwang C."/>
            <person name="Copeland A."/>
            <person name="Lucas S."/>
            <person name="Lapidus A."/>
            <person name="Barry K."/>
            <person name="Detter J.C."/>
            <person name="Glavina Del Rio T."/>
            <person name="Hammon N."/>
            <person name="Israni S."/>
            <person name="Dalin E."/>
            <person name="Tice H."/>
            <person name="Pitluck S."/>
            <person name="Chertkov O."/>
            <person name="Brettin T."/>
            <person name="Bruce D."/>
            <person name="Han C."/>
            <person name="Schmutz J."/>
            <person name="Larimer F."/>
            <person name="Land M.L."/>
            <person name="Hauser L."/>
            <person name="Kyrpides N."/>
            <person name="Mikhailova N."/>
            <person name="Ye Q."/>
            <person name="Zhou J."/>
            <person name="Richardson P."/>
            <person name="Fields M.W."/>
        </authorList>
    </citation>
    <scope>NUCLEOTIDE SEQUENCE [LARGE SCALE GENOMIC DNA]</scope>
    <source>
        <strain>QYMF</strain>
    </source>
</reference>
<sequence>MNLRPEEISSIIQEQIKRYENKLEVKDVGTVIQVGDAIARIHGLEKCMAGELLEFPGGVYGMALNLEEDNVGCVLLGSDDKIKEGDTVKRTGRIVEVPVGEALLGRVVNSLGQPIDGKGPIQTDKYRDIERVAPGIIARKSVHEPLQTGIKAIDSMIPIGRGQRELIIGDRQTGKTAIAIDTIINQKHSDVICIYVAIGQKKSTVSQIQDTLEKNGAMEYTIIVASTASELAPLQYIAPYAGCAMGEEFMENGKHVLIIYDDLSKHAVAYRAMSLLLRRPPGREAYPGDVFYLHSRLLERAAKLSDERGGGSLTALPLIETQAGDVSAYIPTNVISITDGQIFLESELFYSGVRPAVNPGISVSRVGGNAQIKAMKKVAGTLRLELAQYRELAAFAQFGSELDKETQARLAQGERIIEMLKQPQFKPMPVEEQVMMIYAITNKYLTDIEVVEIGPFESQFISYMVGHHAEVGQAIRDNGVLDQASETTLKEAIEAFKKQFKAERE</sequence>
<dbReference type="EC" id="7.1.2.2" evidence="1"/>
<dbReference type="EMBL" id="CP000724">
    <property type="protein sequence ID" value="ABR46581.1"/>
    <property type="molecule type" value="Genomic_DNA"/>
</dbReference>
<dbReference type="RefSeq" id="WP_011971489.1">
    <property type="nucleotide sequence ID" value="NC_009633.1"/>
</dbReference>
<dbReference type="SMR" id="A6TK63"/>
<dbReference type="STRING" id="293826.Amet_0351"/>
<dbReference type="KEGG" id="amt:Amet_0351"/>
<dbReference type="eggNOG" id="COG0056">
    <property type="taxonomic scope" value="Bacteria"/>
</dbReference>
<dbReference type="HOGENOM" id="CLU_010091_2_1_9"/>
<dbReference type="OrthoDB" id="9803053at2"/>
<dbReference type="Proteomes" id="UP000001572">
    <property type="component" value="Chromosome"/>
</dbReference>
<dbReference type="GO" id="GO:0005886">
    <property type="term" value="C:plasma membrane"/>
    <property type="evidence" value="ECO:0007669"/>
    <property type="project" value="UniProtKB-SubCell"/>
</dbReference>
<dbReference type="GO" id="GO:0045259">
    <property type="term" value="C:proton-transporting ATP synthase complex"/>
    <property type="evidence" value="ECO:0007669"/>
    <property type="project" value="UniProtKB-KW"/>
</dbReference>
<dbReference type="GO" id="GO:0043531">
    <property type="term" value="F:ADP binding"/>
    <property type="evidence" value="ECO:0007669"/>
    <property type="project" value="TreeGrafter"/>
</dbReference>
<dbReference type="GO" id="GO:0005524">
    <property type="term" value="F:ATP binding"/>
    <property type="evidence" value="ECO:0007669"/>
    <property type="project" value="UniProtKB-UniRule"/>
</dbReference>
<dbReference type="GO" id="GO:0046933">
    <property type="term" value="F:proton-transporting ATP synthase activity, rotational mechanism"/>
    <property type="evidence" value="ECO:0007669"/>
    <property type="project" value="UniProtKB-UniRule"/>
</dbReference>
<dbReference type="CDD" id="cd18113">
    <property type="entry name" value="ATP-synt_F1_alpha_C"/>
    <property type="match status" value="1"/>
</dbReference>
<dbReference type="CDD" id="cd18116">
    <property type="entry name" value="ATP-synt_F1_alpha_N"/>
    <property type="match status" value="1"/>
</dbReference>
<dbReference type="CDD" id="cd01132">
    <property type="entry name" value="F1-ATPase_alpha_CD"/>
    <property type="match status" value="1"/>
</dbReference>
<dbReference type="FunFam" id="1.20.150.20:FF:000001">
    <property type="entry name" value="ATP synthase subunit alpha"/>
    <property type="match status" value="1"/>
</dbReference>
<dbReference type="FunFam" id="2.40.30.20:FF:000001">
    <property type="entry name" value="ATP synthase subunit alpha"/>
    <property type="match status" value="1"/>
</dbReference>
<dbReference type="FunFam" id="3.40.50.300:FF:000002">
    <property type="entry name" value="ATP synthase subunit alpha"/>
    <property type="match status" value="1"/>
</dbReference>
<dbReference type="Gene3D" id="2.40.30.20">
    <property type="match status" value="1"/>
</dbReference>
<dbReference type="Gene3D" id="1.20.150.20">
    <property type="entry name" value="ATP synthase alpha/beta chain, C-terminal domain"/>
    <property type="match status" value="1"/>
</dbReference>
<dbReference type="Gene3D" id="3.40.50.300">
    <property type="entry name" value="P-loop containing nucleotide triphosphate hydrolases"/>
    <property type="match status" value="1"/>
</dbReference>
<dbReference type="HAMAP" id="MF_01346">
    <property type="entry name" value="ATP_synth_alpha_bact"/>
    <property type="match status" value="1"/>
</dbReference>
<dbReference type="InterPro" id="IPR023366">
    <property type="entry name" value="ATP_synth_asu-like_sf"/>
</dbReference>
<dbReference type="InterPro" id="IPR000793">
    <property type="entry name" value="ATP_synth_asu_C"/>
</dbReference>
<dbReference type="InterPro" id="IPR038376">
    <property type="entry name" value="ATP_synth_asu_C_sf"/>
</dbReference>
<dbReference type="InterPro" id="IPR033732">
    <property type="entry name" value="ATP_synth_F1_a_nt-bd_dom"/>
</dbReference>
<dbReference type="InterPro" id="IPR005294">
    <property type="entry name" value="ATP_synth_F1_asu"/>
</dbReference>
<dbReference type="InterPro" id="IPR020003">
    <property type="entry name" value="ATPase_a/bsu_AS"/>
</dbReference>
<dbReference type="InterPro" id="IPR004100">
    <property type="entry name" value="ATPase_F1/V1/A1_a/bsu_N"/>
</dbReference>
<dbReference type="InterPro" id="IPR036121">
    <property type="entry name" value="ATPase_F1/V1/A1_a/bsu_N_sf"/>
</dbReference>
<dbReference type="InterPro" id="IPR000194">
    <property type="entry name" value="ATPase_F1/V1/A1_a/bsu_nucl-bd"/>
</dbReference>
<dbReference type="InterPro" id="IPR027417">
    <property type="entry name" value="P-loop_NTPase"/>
</dbReference>
<dbReference type="NCBIfam" id="TIGR00962">
    <property type="entry name" value="atpA"/>
    <property type="match status" value="1"/>
</dbReference>
<dbReference type="NCBIfam" id="NF009884">
    <property type="entry name" value="PRK13343.1"/>
    <property type="match status" value="1"/>
</dbReference>
<dbReference type="PANTHER" id="PTHR48082">
    <property type="entry name" value="ATP SYNTHASE SUBUNIT ALPHA, MITOCHONDRIAL"/>
    <property type="match status" value="1"/>
</dbReference>
<dbReference type="PANTHER" id="PTHR48082:SF2">
    <property type="entry name" value="ATP SYNTHASE SUBUNIT ALPHA, MITOCHONDRIAL"/>
    <property type="match status" value="1"/>
</dbReference>
<dbReference type="Pfam" id="PF00006">
    <property type="entry name" value="ATP-synt_ab"/>
    <property type="match status" value="1"/>
</dbReference>
<dbReference type="Pfam" id="PF00306">
    <property type="entry name" value="ATP-synt_ab_C"/>
    <property type="match status" value="1"/>
</dbReference>
<dbReference type="Pfam" id="PF02874">
    <property type="entry name" value="ATP-synt_ab_N"/>
    <property type="match status" value="1"/>
</dbReference>
<dbReference type="PIRSF" id="PIRSF039088">
    <property type="entry name" value="F_ATPase_subunit_alpha"/>
    <property type="match status" value="1"/>
</dbReference>
<dbReference type="SUPFAM" id="SSF47917">
    <property type="entry name" value="C-terminal domain of alpha and beta subunits of F1 ATP synthase"/>
    <property type="match status" value="1"/>
</dbReference>
<dbReference type="SUPFAM" id="SSF50615">
    <property type="entry name" value="N-terminal domain of alpha and beta subunits of F1 ATP synthase"/>
    <property type="match status" value="1"/>
</dbReference>
<dbReference type="SUPFAM" id="SSF52540">
    <property type="entry name" value="P-loop containing nucleoside triphosphate hydrolases"/>
    <property type="match status" value="1"/>
</dbReference>
<dbReference type="PROSITE" id="PS00152">
    <property type="entry name" value="ATPASE_ALPHA_BETA"/>
    <property type="match status" value="1"/>
</dbReference>
<accession>A6TK63</accession>
<keyword id="KW-0066">ATP synthesis</keyword>
<keyword id="KW-0067">ATP-binding</keyword>
<keyword id="KW-1003">Cell membrane</keyword>
<keyword id="KW-0139">CF(1)</keyword>
<keyword id="KW-0375">Hydrogen ion transport</keyword>
<keyword id="KW-0406">Ion transport</keyword>
<keyword id="KW-0472">Membrane</keyword>
<keyword id="KW-0547">Nucleotide-binding</keyword>
<keyword id="KW-1185">Reference proteome</keyword>
<keyword id="KW-1278">Translocase</keyword>
<keyword id="KW-0813">Transport</keyword>
<name>ATPA_ALKMQ</name>
<proteinExistence type="inferred from homology"/>
<organism>
    <name type="scientific">Alkaliphilus metalliredigens (strain QYMF)</name>
    <dbReference type="NCBI Taxonomy" id="293826"/>
    <lineage>
        <taxon>Bacteria</taxon>
        <taxon>Bacillati</taxon>
        <taxon>Bacillota</taxon>
        <taxon>Clostridia</taxon>
        <taxon>Peptostreptococcales</taxon>
        <taxon>Natronincolaceae</taxon>
        <taxon>Alkaliphilus</taxon>
    </lineage>
</organism>
<evidence type="ECO:0000255" key="1">
    <source>
        <dbReference type="HAMAP-Rule" id="MF_01346"/>
    </source>
</evidence>
<protein>
    <recommendedName>
        <fullName evidence="1">ATP synthase subunit alpha</fullName>
        <ecNumber evidence="1">7.1.2.2</ecNumber>
    </recommendedName>
    <alternativeName>
        <fullName evidence="1">ATP synthase F1 sector subunit alpha</fullName>
    </alternativeName>
    <alternativeName>
        <fullName evidence="1">F-ATPase subunit alpha</fullName>
    </alternativeName>
</protein>
<comment type="function">
    <text evidence="1">Produces ATP from ADP in the presence of a proton gradient across the membrane. The alpha chain is a regulatory subunit.</text>
</comment>
<comment type="catalytic activity">
    <reaction evidence="1">
        <text>ATP + H2O + 4 H(+)(in) = ADP + phosphate + 5 H(+)(out)</text>
        <dbReference type="Rhea" id="RHEA:57720"/>
        <dbReference type="ChEBI" id="CHEBI:15377"/>
        <dbReference type="ChEBI" id="CHEBI:15378"/>
        <dbReference type="ChEBI" id="CHEBI:30616"/>
        <dbReference type="ChEBI" id="CHEBI:43474"/>
        <dbReference type="ChEBI" id="CHEBI:456216"/>
        <dbReference type="EC" id="7.1.2.2"/>
    </reaction>
</comment>
<comment type="subunit">
    <text evidence="1">F-type ATPases have 2 components, CF(1) - the catalytic core - and CF(0) - the membrane proton channel. CF(1) has five subunits: alpha(3), beta(3), gamma(1), delta(1), epsilon(1). CF(0) has three main subunits: a(1), b(2) and c(9-12). The alpha and beta chains form an alternating ring which encloses part of the gamma chain. CF(1) is attached to CF(0) by a central stalk formed by the gamma and epsilon chains, while a peripheral stalk is formed by the delta and b chains.</text>
</comment>
<comment type="subcellular location">
    <subcellularLocation>
        <location evidence="1">Cell membrane</location>
        <topology evidence="1">Peripheral membrane protein</topology>
    </subcellularLocation>
</comment>
<comment type="similarity">
    <text evidence="1">Belongs to the ATPase alpha/beta chains family.</text>
</comment>